<feature type="chain" id="PRO_0000210841" description="Fe(2+) transporter FeoB">
    <location>
        <begin position="1"/>
        <end position="664"/>
    </location>
</feature>
<feature type="transmembrane region" description="Helical" evidence="2">
    <location>
        <begin position="281"/>
        <end position="301"/>
    </location>
</feature>
<feature type="transmembrane region" description="Helical" evidence="2">
    <location>
        <begin position="342"/>
        <end position="362"/>
    </location>
</feature>
<feature type="transmembrane region" description="Helical" evidence="2">
    <location>
        <begin position="382"/>
        <end position="402"/>
    </location>
</feature>
<feature type="transmembrane region" description="Helical" evidence="2">
    <location>
        <begin position="425"/>
        <end position="445"/>
    </location>
</feature>
<feature type="transmembrane region" description="Helical" evidence="2">
    <location>
        <begin position="452"/>
        <end position="472"/>
    </location>
</feature>
<feature type="transmembrane region" description="Helical" evidence="2">
    <location>
        <begin position="516"/>
        <end position="536"/>
    </location>
</feature>
<feature type="transmembrane region" description="Helical" evidence="2">
    <location>
        <begin position="544"/>
        <end position="564"/>
    </location>
</feature>
<feature type="transmembrane region" description="Helical" evidence="2">
    <location>
        <begin position="567"/>
        <end position="587"/>
    </location>
</feature>
<feature type="transmembrane region" description="Helical" evidence="2">
    <location>
        <begin position="608"/>
        <end position="628"/>
    </location>
</feature>
<feature type="transmembrane region" description="Helical" evidence="2">
    <location>
        <begin position="637"/>
        <end position="657"/>
    </location>
</feature>
<feature type="domain" description="FeoB-type G" evidence="3">
    <location>
        <begin position="1"/>
        <end position="161"/>
    </location>
</feature>
<feature type="binding site" evidence="3">
    <location>
        <begin position="8"/>
        <end position="15"/>
    </location>
    <ligand>
        <name>GTP</name>
        <dbReference type="ChEBI" id="CHEBI:37565"/>
        <label>1</label>
    </ligand>
</feature>
<feature type="binding site" evidence="3">
    <location>
        <begin position="33"/>
        <end position="37"/>
    </location>
    <ligand>
        <name>GTP</name>
        <dbReference type="ChEBI" id="CHEBI:37565"/>
        <label>2</label>
    </ligand>
</feature>
<feature type="binding site" evidence="3">
    <location>
        <begin position="52"/>
        <end position="55"/>
    </location>
    <ligand>
        <name>GTP</name>
        <dbReference type="ChEBI" id="CHEBI:37565"/>
        <label>3</label>
    </ligand>
</feature>
<feature type="binding site" evidence="3">
    <location>
        <begin position="112"/>
        <end position="115"/>
    </location>
    <ligand>
        <name>GTP</name>
        <dbReference type="ChEBI" id="CHEBI:37565"/>
    </ligand>
</feature>
<feature type="binding site" evidence="3">
    <location>
        <begin position="141"/>
        <end position="143"/>
    </location>
    <ligand>
        <name>GTP</name>
        <dbReference type="ChEBI" id="CHEBI:37565"/>
    </ligand>
</feature>
<gene>
    <name type="primary">feoB</name>
    <name type="ordered locus">SACOL2564</name>
</gene>
<protein>
    <recommendedName>
        <fullName evidence="4">Fe(2+) transporter FeoB</fullName>
    </recommendedName>
    <alternativeName>
        <fullName>Ferrous iron transport protein B</fullName>
    </alternativeName>
</protein>
<dbReference type="EMBL" id="CP000046">
    <property type="protein sequence ID" value="AAW38566.1"/>
    <property type="molecule type" value="Genomic_DNA"/>
</dbReference>
<dbReference type="RefSeq" id="WP_000432907.1">
    <property type="nucleotide sequence ID" value="NZ_JBGOFO010000001.1"/>
</dbReference>
<dbReference type="SMR" id="Q5HD01"/>
<dbReference type="KEGG" id="sac:SACOL2564"/>
<dbReference type="HOGENOM" id="CLU_013350_3_0_9"/>
<dbReference type="Proteomes" id="UP000000530">
    <property type="component" value="Chromosome"/>
</dbReference>
<dbReference type="GO" id="GO:0005886">
    <property type="term" value="C:plasma membrane"/>
    <property type="evidence" value="ECO:0007669"/>
    <property type="project" value="UniProtKB-SubCell"/>
</dbReference>
<dbReference type="GO" id="GO:0015093">
    <property type="term" value="F:ferrous iron transmembrane transporter activity"/>
    <property type="evidence" value="ECO:0007669"/>
    <property type="project" value="InterPro"/>
</dbReference>
<dbReference type="GO" id="GO:0005525">
    <property type="term" value="F:GTP binding"/>
    <property type="evidence" value="ECO:0007669"/>
    <property type="project" value="UniProtKB-KW"/>
</dbReference>
<dbReference type="CDD" id="cd01879">
    <property type="entry name" value="FeoB"/>
    <property type="match status" value="1"/>
</dbReference>
<dbReference type="FunFam" id="3.40.50.300:FF:001475">
    <property type="entry name" value="Ferrous iron transport protein B"/>
    <property type="match status" value="1"/>
</dbReference>
<dbReference type="Gene3D" id="1.10.287.1770">
    <property type="match status" value="1"/>
</dbReference>
<dbReference type="Gene3D" id="3.40.50.300">
    <property type="entry name" value="P-loop containing nucleotide triphosphate hydrolases"/>
    <property type="match status" value="1"/>
</dbReference>
<dbReference type="InterPro" id="IPR003373">
    <property type="entry name" value="Fe2_transport_prot-B"/>
</dbReference>
<dbReference type="InterPro" id="IPR011640">
    <property type="entry name" value="Fe2_transport_prot_B_C"/>
</dbReference>
<dbReference type="InterPro" id="IPR041069">
    <property type="entry name" value="FeoB_Cyto"/>
</dbReference>
<dbReference type="InterPro" id="IPR050860">
    <property type="entry name" value="FeoB_GTPase"/>
</dbReference>
<dbReference type="InterPro" id="IPR030389">
    <property type="entry name" value="G_FEOB_dom"/>
</dbReference>
<dbReference type="InterPro" id="IPR011642">
    <property type="entry name" value="Gate_dom"/>
</dbReference>
<dbReference type="InterPro" id="IPR027417">
    <property type="entry name" value="P-loop_NTPase"/>
</dbReference>
<dbReference type="NCBIfam" id="TIGR00437">
    <property type="entry name" value="feoB"/>
    <property type="match status" value="1"/>
</dbReference>
<dbReference type="PANTHER" id="PTHR43185:SF1">
    <property type="entry name" value="FE(2+) TRANSPORTER FEOB"/>
    <property type="match status" value="1"/>
</dbReference>
<dbReference type="PANTHER" id="PTHR43185">
    <property type="entry name" value="FERROUS IRON TRANSPORT PROTEIN B"/>
    <property type="match status" value="1"/>
</dbReference>
<dbReference type="Pfam" id="PF07664">
    <property type="entry name" value="FeoB_C"/>
    <property type="match status" value="1"/>
</dbReference>
<dbReference type="Pfam" id="PF17910">
    <property type="entry name" value="FeoB_Cyto"/>
    <property type="match status" value="1"/>
</dbReference>
<dbReference type="Pfam" id="PF02421">
    <property type="entry name" value="FeoB_N"/>
    <property type="match status" value="1"/>
</dbReference>
<dbReference type="Pfam" id="PF07670">
    <property type="entry name" value="Gate"/>
    <property type="match status" value="2"/>
</dbReference>
<dbReference type="SUPFAM" id="SSF52540">
    <property type="entry name" value="P-loop containing nucleoside triphosphate hydrolases"/>
    <property type="match status" value="1"/>
</dbReference>
<dbReference type="PROSITE" id="PS51711">
    <property type="entry name" value="G_FEOB"/>
    <property type="match status" value="1"/>
</dbReference>
<sequence>MENYCILGNPNVGKTSLFNALTGSYEYIGNWSGVTVEKKVGKLKENVGQLIDLPGTYDLSPISKDETVVTDYLLNDSFSGIINIVDASQLKRNMQLTVQLLELNQPIYIGLNMIDVATKRGIKIDYHKLMKKLKTPIFPVVARTGKGTKYLLGEIKHLGEGYQPHFKINYGEKIEETIKNMCQIIMTETSHDKYQARFIAIQFLLNNMQIANELNSEVVNKLSSLRDQVAEQVGAVSVRREMERIRNHYIETLLQDVVTYPDEDKQYFSSRIDKILTHKYIGMPIFLAIMWLIFQTTFTWIGTPLSDQLDAFIGGTFTDSVKTIMNYLGVIPFLQDLITDGIIAGVGSVLVFVPQIVVLFFFISLLEDSGYMARIAVLMDRIMESFGLSGKSFIPMIIGFGCNVPSIMAARSIENEKERLTTILIAPFMSCSARLPVYALFVGIFFKENQSLVVLSLYVLGIIMAFLVSTVLTKTILKNDNAIFIVELPTYRVPSIKTLWRSTWEKAKGFVRKAGTFIFGGSVVIWLLSYVGPHGINVNINQSFLHMVGSFFGMLVQPLGFGTWQAGATLVPGFLAKEVIVSSMAIIYSSGDAGLVNVIQNQFTPLSAYAFMIFILLYIPCVSTVAAIRKETYSWKWTALAVAYPLVTAYVLTFIFYQVGHLFV</sequence>
<comment type="function">
    <text evidence="1">Probable transporter of a GTP-driven Fe(2+) uptake system.</text>
</comment>
<comment type="subcellular location">
    <subcellularLocation>
        <location evidence="4">Cell membrane</location>
        <topology evidence="2">Multi-pass membrane protein</topology>
    </subcellularLocation>
</comment>
<comment type="similarity">
    <text evidence="3">Belongs to the TRAFAC class TrmE-Era-EngA-EngB-Septin-like GTPase superfamily. FeoB GTPase (TC 9.A.8) family.</text>
</comment>
<organism>
    <name type="scientific">Staphylococcus aureus (strain COL)</name>
    <dbReference type="NCBI Taxonomy" id="93062"/>
    <lineage>
        <taxon>Bacteria</taxon>
        <taxon>Bacillati</taxon>
        <taxon>Bacillota</taxon>
        <taxon>Bacilli</taxon>
        <taxon>Bacillales</taxon>
        <taxon>Staphylococcaceae</taxon>
        <taxon>Staphylococcus</taxon>
    </lineage>
</organism>
<proteinExistence type="inferred from homology"/>
<accession>Q5HD01</accession>
<evidence type="ECO:0000250" key="1">
    <source>
        <dbReference type="UniProtKB" id="P33650"/>
    </source>
</evidence>
<evidence type="ECO:0000255" key="2"/>
<evidence type="ECO:0000255" key="3">
    <source>
        <dbReference type="PROSITE-ProRule" id="PRU01048"/>
    </source>
</evidence>
<evidence type="ECO:0000305" key="4"/>
<keyword id="KW-1003">Cell membrane</keyword>
<keyword id="KW-0342">GTP-binding</keyword>
<keyword id="KW-0406">Ion transport</keyword>
<keyword id="KW-0408">Iron</keyword>
<keyword id="KW-0410">Iron transport</keyword>
<keyword id="KW-0472">Membrane</keyword>
<keyword id="KW-0547">Nucleotide-binding</keyword>
<keyword id="KW-0812">Transmembrane</keyword>
<keyword id="KW-1133">Transmembrane helix</keyword>
<keyword id="KW-0813">Transport</keyword>
<name>FEOB_STAAC</name>
<reference key="1">
    <citation type="journal article" date="2005" name="J. Bacteriol.">
        <title>Insights on evolution of virulence and resistance from the complete genome analysis of an early methicillin-resistant Staphylococcus aureus strain and a biofilm-producing methicillin-resistant Staphylococcus epidermidis strain.</title>
        <authorList>
            <person name="Gill S.R."/>
            <person name="Fouts D.E."/>
            <person name="Archer G.L."/>
            <person name="Mongodin E.F."/>
            <person name="DeBoy R.T."/>
            <person name="Ravel J."/>
            <person name="Paulsen I.T."/>
            <person name="Kolonay J.F."/>
            <person name="Brinkac L.M."/>
            <person name="Beanan M.J."/>
            <person name="Dodson R.J."/>
            <person name="Daugherty S.C."/>
            <person name="Madupu R."/>
            <person name="Angiuoli S.V."/>
            <person name="Durkin A.S."/>
            <person name="Haft D.H."/>
            <person name="Vamathevan J.J."/>
            <person name="Khouri H."/>
            <person name="Utterback T.R."/>
            <person name="Lee C."/>
            <person name="Dimitrov G."/>
            <person name="Jiang L."/>
            <person name="Qin H."/>
            <person name="Weidman J."/>
            <person name="Tran K."/>
            <person name="Kang K.H."/>
            <person name="Hance I.R."/>
            <person name="Nelson K.E."/>
            <person name="Fraser C.M."/>
        </authorList>
    </citation>
    <scope>NUCLEOTIDE SEQUENCE [LARGE SCALE GENOMIC DNA]</scope>
    <source>
        <strain>COL</strain>
    </source>
</reference>